<evidence type="ECO:0000250" key="1"/>
<evidence type="ECO:0000250" key="2">
    <source>
        <dbReference type="UniProtKB" id="O04073"/>
    </source>
</evidence>
<evidence type="ECO:0000255" key="3"/>
<evidence type="ECO:0000255" key="4">
    <source>
        <dbReference type="PROSITE-ProRule" id="PRU00143"/>
    </source>
</evidence>
<evidence type="ECO:0000256" key="5">
    <source>
        <dbReference type="SAM" id="MobiDB-lite"/>
    </source>
</evidence>
<evidence type="ECO:0000269" key="6">
    <source>
    </source>
</evidence>
<evidence type="ECO:0000303" key="7">
    <source>
    </source>
</evidence>
<evidence type="ECO:0000305" key="8"/>
<comment type="function">
    <text evidence="2">Protease involved in the C-terminal processing of the chloroplastic D1 protein of photosystem II. This proteolytic processing is necessary to allow the light-driven assembly of the tetranuclear manganese cluster, which is responsible for photosynthetic water oxidation.</text>
</comment>
<comment type="catalytic activity">
    <reaction>
        <text>The enzyme shows specific recognition of a C-terminal tripeptide, Xaa-Yaa-Zaa, in which Xaa is preferably Ala or Leu, Yaa is preferably Ala or Tyr, and Zaa is preferably Ala, but then cleaves at a variable distance from the C-terminus. A typical cleavage is -Ala-Ala-|-Arg-Ala-Ala-Lys-Glu-Asn-Tyr-Ala-Leu-Ala-Ala.</text>
        <dbReference type="EC" id="3.4.21.102"/>
    </reaction>
</comment>
<comment type="subcellular location">
    <subcellularLocation>
        <location evidence="6">Plastid</location>
        <location evidence="6">Chloroplast thylakoid lumen</location>
    </subcellularLocation>
</comment>
<comment type="alternative products">
    <event type="alternative splicing"/>
    <isoform>
        <id>F4KHG6-1</id>
        <name>1</name>
        <sequence type="displayed"/>
    </isoform>
    <isoform>
        <id>F4KHG6-2</id>
        <name>2</name>
        <sequence type="described" ref="VSP_054870 VSP_054871"/>
    </isoform>
</comment>
<comment type="similarity">
    <text evidence="8">Belongs to the peptidase S41A family.</text>
</comment>
<comment type="sequence caution" evidence="8">
    <conflict type="erroneous gene model prediction">
        <sequence resource="EMBL-CDS" id="BAB11094"/>
    </conflict>
</comment>
<gene>
    <name type="primary">CTPA1</name>
    <name type="ordered locus">At5g46390</name>
    <name type="ORF">MPL12.19</name>
</gene>
<name>CTPA1_ARATH</name>
<proteinExistence type="evidence at protein level"/>
<protein>
    <recommendedName>
        <fullName>Carboxyl-terminal-processing peptidase 1, chloroplastic</fullName>
        <ecNumber>3.4.21.102</ecNumber>
    </recommendedName>
    <alternativeName>
        <fullName>D1 C-terminal processing protease 1</fullName>
    </alternativeName>
    <alternativeName>
        <fullName>Photosystem II D1 protein processing peptidase 1</fullName>
    </alternativeName>
</protein>
<reference key="1">
    <citation type="journal article" date="1998" name="DNA Res.">
        <title>Structural analysis of Arabidopsis thaliana chromosome 5. V. Sequence features of the regions of 1,381,565 bp covered by twenty one physically assigned P1 and TAC clones.</title>
        <authorList>
            <person name="Kaneko T."/>
            <person name="Kotani H."/>
            <person name="Nakamura Y."/>
            <person name="Sato S."/>
            <person name="Asamizu E."/>
            <person name="Miyajima N."/>
            <person name="Tabata S."/>
        </authorList>
    </citation>
    <scope>NUCLEOTIDE SEQUENCE [LARGE SCALE GENOMIC DNA]</scope>
    <source>
        <strain>cv. Columbia</strain>
    </source>
</reference>
<reference key="2">
    <citation type="journal article" date="2017" name="Plant J.">
        <title>Araport11: a complete reannotation of the Arabidopsis thaliana reference genome.</title>
        <authorList>
            <person name="Cheng C.Y."/>
            <person name="Krishnakumar V."/>
            <person name="Chan A.P."/>
            <person name="Thibaud-Nissen F."/>
            <person name="Schobel S."/>
            <person name="Town C.D."/>
        </authorList>
    </citation>
    <scope>GENOME REANNOTATION</scope>
    <source>
        <strain>cv. Columbia</strain>
    </source>
</reference>
<reference key="3">
    <citation type="journal article" date="2003" name="Science">
        <title>Empirical analysis of transcriptional activity in the Arabidopsis genome.</title>
        <authorList>
            <person name="Yamada K."/>
            <person name="Lim J."/>
            <person name="Dale J.M."/>
            <person name="Chen H."/>
            <person name="Shinn P."/>
            <person name="Palm C.J."/>
            <person name="Southwick A.M."/>
            <person name="Wu H.C."/>
            <person name="Kim C.J."/>
            <person name="Nguyen M."/>
            <person name="Pham P.K."/>
            <person name="Cheuk R.F."/>
            <person name="Karlin-Newmann G."/>
            <person name="Liu S.X."/>
            <person name="Lam B."/>
            <person name="Sakano H."/>
            <person name="Wu T."/>
            <person name="Yu G."/>
            <person name="Miranda M."/>
            <person name="Quach H.L."/>
            <person name="Tripp M."/>
            <person name="Chang C.H."/>
            <person name="Lee J.M."/>
            <person name="Toriumi M.J."/>
            <person name="Chan M.M."/>
            <person name="Tang C.C."/>
            <person name="Onodera C.S."/>
            <person name="Deng J.M."/>
            <person name="Akiyama K."/>
            <person name="Ansari Y."/>
            <person name="Arakawa T."/>
            <person name="Banh J."/>
            <person name="Banno F."/>
            <person name="Bowser L."/>
            <person name="Brooks S.Y."/>
            <person name="Carninci P."/>
            <person name="Chao Q."/>
            <person name="Choy N."/>
            <person name="Enju A."/>
            <person name="Goldsmith A.D."/>
            <person name="Gurjal M."/>
            <person name="Hansen N.F."/>
            <person name="Hayashizaki Y."/>
            <person name="Johnson-Hopson C."/>
            <person name="Hsuan V.W."/>
            <person name="Iida K."/>
            <person name="Karnes M."/>
            <person name="Khan S."/>
            <person name="Koesema E."/>
            <person name="Ishida J."/>
            <person name="Jiang P.X."/>
            <person name="Jones T."/>
            <person name="Kawai J."/>
            <person name="Kamiya A."/>
            <person name="Meyers C."/>
            <person name="Nakajima M."/>
            <person name="Narusaka M."/>
            <person name="Seki M."/>
            <person name="Sakurai T."/>
            <person name="Satou M."/>
            <person name="Tamse R."/>
            <person name="Vaysberg M."/>
            <person name="Wallender E.K."/>
            <person name="Wong C."/>
            <person name="Yamamura Y."/>
            <person name="Yuan S."/>
            <person name="Shinozaki K."/>
            <person name="Davis R.W."/>
            <person name="Theologis A."/>
            <person name="Ecker J.R."/>
        </authorList>
    </citation>
    <scope>NUCLEOTIDE SEQUENCE [LARGE SCALE MRNA] (ISOFORM 2)</scope>
    <source>
        <strain>cv. Columbia</strain>
    </source>
</reference>
<reference key="4">
    <citation type="journal article" date="2002" name="J. Biol. Chem.">
        <title>Proteome map of the chloroplast lumen of Arabidopsis thaliana.</title>
        <authorList>
            <person name="Schubert M."/>
            <person name="Petersson U.A."/>
            <person name="Haas B.J."/>
            <person name="Funk C."/>
            <person name="Schroeder W.P."/>
            <person name="Kieselbach T."/>
        </authorList>
    </citation>
    <scope>PROTEIN SEQUENCE OF 68-75</scope>
    <scope>SUBCELLULAR LOCATION</scope>
</reference>
<reference key="5">
    <citation type="journal article" date="2006" name="BMC Genomics">
        <title>Cross genome comparisons of serine proteases in Arabidopsis and rice.</title>
        <authorList>
            <person name="Tripathi L.P."/>
            <person name="Sowdhamini R."/>
        </authorList>
    </citation>
    <scope>REVIEW</scope>
</reference>
<organism>
    <name type="scientific">Arabidopsis thaliana</name>
    <name type="common">Mouse-ear cress</name>
    <dbReference type="NCBI Taxonomy" id="3702"/>
    <lineage>
        <taxon>Eukaryota</taxon>
        <taxon>Viridiplantae</taxon>
        <taxon>Streptophyta</taxon>
        <taxon>Embryophyta</taxon>
        <taxon>Tracheophyta</taxon>
        <taxon>Spermatophyta</taxon>
        <taxon>Magnoliopsida</taxon>
        <taxon>eudicotyledons</taxon>
        <taxon>Gunneridae</taxon>
        <taxon>Pentapetalae</taxon>
        <taxon>rosids</taxon>
        <taxon>malvids</taxon>
        <taxon>Brassicales</taxon>
        <taxon>Brassicaceae</taxon>
        <taxon>Camelineae</taxon>
        <taxon>Arabidopsis</taxon>
    </lineage>
</organism>
<dbReference type="EC" id="3.4.21.102"/>
<dbReference type="EMBL" id="AB010698">
    <property type="protein sequence ID" value="BAB11094.1"/>
    <property type="status" value="ALT_SEQ"/>
    <property type="molecule type" value="Genomic_DNA"/>
</dbReference>
<dbReference type="EMBL" id="CP002688">
    <property type="protein sequence ID" value="AED95377.1"/>
    <property type="molecule type" value="Genomic_DNA"/>
</dbReference>
<dbReference type="EMBL" id="CP002688">
    <property type="protein sequence ID" value="AED95378.1"/>
    <property type="molecule type" value="Genomic_DNA"/>
</dbReference>
<dbReference type="EMBL" id="AY062767">
    <property type="protein sequence ID" value="AAL32845.1"/>
    <property type="molecule type" value="mRNA"/>
</dbReference>
<dbReference type="EMBL" id="AY081650">
    <property type="protein sequence ID" value="AAM10212.1"/>
    <property type="molecule type" value="mRNA"/>
</dbReference>
<dbReference type="RefSeq" id="NP_199451.2">
    <molecule id="F4KHG6-2"/>
    <property type="nucleotide sequence ID" value="NM_124009.2"/>
</dbReference>
<dbReference type="RefSeq" id="NP_974893.1">
    <molecule id="F4KHG6-1"/>
    <property type="nucleotide sequence ID" value="NM_203164.3"/>
</dbReference>
<dbReference type="SMR" id="F4KHG6"/>
<dbReference type="FunCoup" id="F4KHG6">
    <property type="interactions" value="930"/>
</dbReference>
<dbReference type="IntAct" id="F4KHG6">
    <property type="interactions" value="1"/>
</dbReference>
<dbReference type="STRING" id="3702.F4KHG6"/>
<dbReference type="MEROPS" id="S41.A02"/>
<dbReference type="PaxDb" id="3702-AT5G46390.2"/>
<dbReference type="ProteomicsDB" id="220454">
    <molecule id="F4KHG6-1"/>
</dbReference>
<dbReference type="EnsemblPlants" id="AT5G46390.1">
    <molecule id="F4KHG6-2"/>
    <property type="protein sequence ID" value="AT5G46390.1"/>
    <property type="gene ID" value="AT5G46390"/>
</dbReference>
<dbReference type="EnsemblPlants" id="AT5G46390.2">
    <molecule id="F4KHG6-1"/>
    <property type="protein sequence ID" value="AT5G46390.2"/>
    <property type="gene ID" value="AT5G46390"/>
</dbReference>
<dbReference type="GeneID" id="834682"/>
<dbReference type="Gramene" id="AT5G46390.1">
    <molecule id="F4KHG6-2"/>
    <property type="protein sequence ID" value="AT5G46390.1"/>
    <property type="gene ID" value="AT5G46390"/>
</dbReference>
<dbReference type="Gramene" id="AT5G46390.2">
    <molecule id="F4KHG6-1"/>
    <property type="protein sequence ID" value="AT5G46390.2"/>
    <property type="gene ID" value="AT5G46390"/>
</dbReference>
<dbReference type="KEGG" id="ath:AT5G46390"/>
<dbReference type="Araport" id="AT5G46390"/>
<dbReference type="TAIR" id="AT5G46390"/>
<dbReference type="eggNOG" id="ENOG502QT7D">
    <property type="taxonomic scope" value="Eukaryota"/>
</dbReference>
<dbReference type="HOGENOM" id="CLU_017295_0_1_1"/>
<dbReference type="InParanoid" id="F4KHG6"/>
<dbReference type="OMA" id="TWSIVDE"/>
<dbReference type="PRO" id="PR:F4KHG6"/>
<dbReference type="Proteomes" id="UP000006548">
    <property type="component" value="Chromosome 5"/>
</dbReference>
<dbReference type="ExpressionAtlas" id="F4KHG6">
    <property type="expression patterns" value="baseline and differential"/>
</dbReference>
<dbReference type="GO" id="GO:0009543">
    <property type="term" value="C:chloroplast thylakoid lumen"/>
    <property type="evidence" value="ECO:0007669"/>
    <property type="project" value="UniProtKB-SubCell"/>
</dbReference>
<dbReference type="GO" id="GO:0031977">
    <property type="term" value="C:thylakoid lumen"/>
    <property type="evidence" value="ECO:0007005"/>
    <property type="project" value="TAIR"/>
</dbReference>
<dbReference type="GO" id="GO:0004252">
    <property type="term" value="F:serine-type endopeptidase activity"/>
    <property type="evidence" value="ECO:0007669"/>
    <property type="project" value="UniProtKB-EC"/>
</dbReference>
<dbReference type="GO" id="GO:0006508">
    <property type="term" value="P:proteolysis"/>
    <property type="evidence" value="ECO:0007669"/>
    <property type="project" value="UniProtKB-KW"/>
</dbReference>
<dbReference type="CDD" id="cd06782">
    <property type="entry name" value="cpPDZ_CPP-like"/>
    <property type="match status" value="1"/>
</dbReference>
<dbReference type="CDD" id="cd07560">
    <property type="entry name" value="Peptidase_S41_CPP"/>
    <property type="match status" value="1"/>
</dbReference>
<dbReference type="FunFam" id="3.90.226.10:FF:000023">
    <property type="entry name" value="Carboxyl-terminal processing protease"/>
    <property type="match status" value="1"/>
</dbReference>
<dbReference type="FunFam" id="2.30.42.10:FF:000146">
    <property type="entry name" value="Carboxyl-terminal-processing peptidase 1, chloroplastic"/>
    <property type="match status" value="1"/>
</dbReference>
<dbReference type="FunFam" id="3.30.750.44:FF:000002">
    <property type="entry name" value="carboxyl-terminal-processing peptidase 2, chloroplastic"/>
    <property type="match status" value="1"/>
</dbReference>
<dbReference type="Gene3D" id="2.30.42.10">
    <property type="match status" value="1"/>
</dbReference>
<dbReference type="Gene3D" id="3.30.750.44">
    <property type="match status" value="1"/>
</dbReference>
<dbReference type="Gene3D" id="3.90.226.10">
    <property type="entry name" value="2-enoyl-CoA Hydratase, Chain A, domain 1"/>
    <property type="match status" value="1"/>
</dbReference>
<dbReference type="InterPro" id="IPR029045">
    <property type="entry name" value="ClpP/crotonase-like_dom_sf"/>
</dbReference>
<dbReference type="InterPro" id="IPR001478">
    <property type="entry name" value="PDZ"/>
</dbReference>
<dbReference type="InterPro" id="IPR041489">
    <property type="entry name" value="PDZ_6"/>
</dbReference>
<dbReference type="InterPro" id="IPR036034">
    <property type="entry name" value="PDZ_sf"/>
</dbReference>
<dbReference type="InterPro" id="IPR004447">
    <property type="entry name" value="Peptidase_S41A"/>
</dbReference>
<dbReference type="InterPro" id="IPR005151">
    <property type="entry name" value="Tail-specific_protease"/>
</dbReference>
<dbReference type="NCBIfam" id="TIGR00225">
    <property type="entry name" value="prc"/>
    <property type="match status" value="1"/>
</dbReference>
<dbReference type="PANTHER" id="PTHR32060:SF31">
    <property type="entry name" value="CARBOXYL-TERMINAL-PROCESSING PEPTIDASE 1, CHLOROPLASTIC"/>
    <property type="match status" value="1"/>
</dbReference>
<dbReference type="PANTHER" id="PTHR32060">
    <property type="entry name" value="TAIL-SPECIFIC PROTEASE"/>
    <property type="match status" value="1"/>
</dbReference>
<dbReference type="Pfam" id="PF17820">
    <property type="entry name" value="PDZ_6"/>
    <property type="match status" value="1"/>
</dbReference>
<dbReference type="Pfam" id="PF03572">
    <property type="entry name" value="Peptidase_S41"/>
    <property type="match status" value="1"/>
</dbReference>
<dbReference type="SMART" id="SM00228">
    <property type="entry name" value="PDZ"/>
    <property type="match status" value="1"/>
</dbReference>
<dbReference type="SMART" id="SM00245">
    <property type="entry name" value="TSPc"/>
    <property type="match status" value="1"/>
</dbReference>
<dbReference type="SUPFAM" id="SSF52096">
    <property type="entry name" value="ClpP/crotonase"/>
    <property type="match status" value="1"/>
</dbReference>
<dbReference type="SUPFAM" id="SSF50156">
    <property type="entry name" value="PDZ domain-like"/>
    <property type="match status" value="1"/>
</dbReference>
<dbReference type="PROSITE" id="PS50106">
    <property type="entry name" value="PDZ"/>
    <property type="match status" value="1"/>
</dbReference>
<accession>F4KHG6</accession>
<accession>Q8W484</accession>
<accession>Q9FL23</accession>
<keyword id="KW-0025">Alternative splicing</keyword>
<keyword id="KW-0150">Chloroplast</keyword>
<keyword id="KW-0903">Direct protein sequencing</keyword>
<keyword id="KW-0378">Hydrolase</keyword>
<keyword id="KW-0934">Plastid</keyword>
<keyword id="KW-0645">Protease</keyword>
<keyword id="KW-1185">Reference proteome</keyword>
<keyword id="KW-0720">Serine protease</keyword>
<keyword id="KW-0793">Thylakoid</keyword>
<keyword id="KW-0809">Transit peptide</keyword>
<sequence length="489" mass="53033">MRLLLPFSSPLSATSSPSTPQFIPELPPPSQFDYSGLTKILKKSVIGTLTGALSLTLVFSSPISSVAATNDPYLSVNPPSSSFESSLNHFDSAPEDCPNEEEADTEIQDDDIEPQLVTNEGIVEEAWEIVNGAFLDTRSHSWTPETWQKQKDDILASPIKSRSKAHEVIKNMLASLGDQYTRFLSPDEFSRMSKYDITGIGINLREVSDGGGNVKLKVLGLVLDSAADIAGVKQGDEILAVNGMDVSGKSSFEVSSLLQGPSKTFVVLKVKHGKCGPVKSLKIQRQVNAQTPVSYRLEKVDNGTVSVGYIRLKEFNALARKDLVIAMKRLLDKGASYFVMDLRDNLGGLVQAGIETAKLFLDEGDTVIYTAGRDPEAQKTVVSDKKPLITAPLIVMVNNRTASASEIVASALHDNCKAVLVGERTYGKGLIQSVYELRDGSGVVVTIGKYVTPNHMDINGGGIEPDFRNLPAWDEVKERLSKCSILQQS</sequence>
<feature type="transit peptide" description="Chloroplast" evidence="3">
    <location>
        <begin position="1"/>
        <end status="unknown"/>
    </location>
</feature>
<feature type="transit peptide" description="Thylakoid" evidence="6">
    <location>
        <begin status="unknown"/>
        <end position="67"/>
    </location>
</feature>
<feature type="chain" id="PRO_0000429321" description="Carboxyl-terminal-processing peptidase 1, chloroplastic">
    <location>
        <begin position="68"/>
        <end position="489"/>
    </location>
</feature>
<feature type="domain" description="PDZ" evidence="4">
    <location>
        <begin position="189"/>
        <end position="273"/>
    </location>
</feature>
<feature type="region of interest" description="Disordered" evidence="5">
    <location>
        <begin position="1"/>
        <end position="27"/>
    </location>
</feature>
<feature type="compositionally biased region" description="Low complexity" evidence="5">
    <location>
        <begin position="1"/>
        <end position="20"/>
    </location>
</feature>
<feature type="active site" description="Charge relay system" evidence="1">
    <location>
        <position position="403"/>
    </location>
</feature>
<feature type="active site" description="Charge relay system" evidence="1">
    <location>
        <position position="428"/>
    </location>
</feature>
<feature type="splice variant" id="VSP_054870" description="In isoform 2." evidence="7">
    <original>MVNNRTASASEIVASALHDNCKAVLVGERTYGK</original>
    <variation>CDESCKPVNLSHYYVILHLALIRILIIVAGNGK</variation>
    <location>
        <begin position="396"/>
        <end position="428"/>
    </location>
</feature>
<feature type="splice variant" id="VSP_054871" description="In isoform 2." evidence="7">
    <location>
        <begin position="429"/>
        <end position="489"/>
    </location>
</feature>